<feature type="chain" id="PRO_0000409250" description="Pheromone-regulated membrane protein 10">
    <location>
        <begin position="1"/>
        <end position="1105"/>
    </location>
</feature>
<feature type="transmembrane region" description="Helical" evidence="1">
    <location>
        <begin position="782"/>
        <end position="802"/>
    </location>
</feature>
<feature type="transmembrane region" description="Helical" evidence="1">
    <location>
        <begin position="809"/>
        <end position="829"/>
    </location>
</feature>
<feature type="transmembrane region" description="Helical" evidence="1">
    <location>
        <begin position="835"/>
        <end position="855"/>
    </location>
</feature>
<feature type="transmembrane region" description="Helical" evidence="1">
    <location>
        <begin position="860"/>
        <end position="880"/>
    </location>
</feature>
<feature type="transmembrane region" description="Helical" evidence="1">
    <location>
        <begin position="903"/>
        <end position="923"/>
    </location>
</feature>
<feature type="transmembrane region" description="Helical" evidence="1">
    <location>
        <begin position="938"/>
        <end position="958"/>
    </location>
</feature>
<feature type="transmembrane region" description="Helical" evidence="1">
    <location>
        <begin position="963"/>
        <end position="983"/>
    </location>
</feature>
<feature type="transmembrane region" description="Helical" evidence="1">
    <location>
        <begin position="986"/>
        <end position="1006"/>
    </location>
</feature>
<feature type="transmembrane region" description="Helical" evidence="1">
    <location>
        <begin position="1015"/>
        <end position="1035"/>
    </location>
</feature>
<feature type="transmembrane region" description="Helical" evidence="1">
    <location>
        <begin position="1075"/>
        <end position="1095"/>
    </location>
</feature>
<feature type="region of interest" description="Disordered" evidence="2">
    <location>
        <begin position="1"/>
        <end position="22"/>
    </location>
</feature>
<feature type="region of interest" description="Disordered" evidence="2">
    <location>
        <begin position="36"/>
        <end position="55"/>
    </location>
</feature>
<feature type="region of interest" description="Disordered" evidence="2">
    <location>
        <begin position="65"/>
        <end position="123"/>
    </location>
</feature>
<feature type="region of interest" description="Disordered" evidence="2">
    <location>
        <begin position="151"/>
        <end position="278"/>
    </location>
</feature>
<feature type="region of interest" description="Disordered" evidence="2">
    <location>
        <begin position="385"/>
        <end position="473"/>
    </location>
</feature>
<feature type="region of interest" description="Disordered" evidence="2">
    <location>
        <begin position="520"/>
        <end position="656"/>
    </location>
</feature>
<feature type="compositionally biased region" description="Polar residues" evidence="2">
    <location>
        <begin position="1"/>
        <end position="11"/>
    </location>
</feature>
<feature type="compositionally biased region" description="Low complexity" evidence="2">
    <location>
        <begin position="67"/>
        <end position="82"/>
    </location>
</feature>
<feature type="compositionally biased region" description="Polar residues" evidence="2">
    <location>
        <begin position="85"/>
        <end position="106"/>
    </location>
</feature>
<feature type="compositionally biased region" description="Acidic residues" evidence="2">
    <location>
        <begin position="162"/>
        <end position="178"/>
    </location>
</feature>
<feature type="compositionally biased region" description="Polar residues" evidence="2">
    <location>
        <begin position="185"/>
        <end position="197"/>
    </location>
</feature>
<feature type="compositionally biased region" description="Acidic residues" evidence="2">
    <location>
        <begin position="198"/>
        <end position="210"/>
    </location>
</feature>
<feature type="compositionally biased region" description="Polar residues" evidence="2">
    <location>
        <begin position="390"/>
        <end position="413"/>
    </location>
</feature>
<feature type="compositionally biased region" description="Low complexity" evidence="2">
    <location>
        <begin position="417"/>
        <end position="439"/>
    </location>
</feature>
<feature type="compositionally biased region" description="Basic and acidic residues" evidence="2">
    <location>
        <begin position="446"/>
        <end position="459"/>
    </location>
</feature>
<feature type="compositionally biased region" description="Polar residues" evidence="2">
    <location>
        <begin position="520"/>
        <end position="539"/>
    </location>
</feature>
<feature type="compositionally biased region" description="Polar residues" evidence="2">
    <location>
        <begin position="592"/>
        <end position="606"/>
    </location>
</feature>
<feature type="compositionally biased region" description="Polar residues" evidence="2">
    <location>
        <begin position="624"/>
        <end position="633"/>
    </location>
</feature>
<protein>
    <recommendedName>
        <fullName>Pheromone-regulated membrane protein 10</fullName>
    </recommendedName>
</protein>
<gene>
    <name type="primary">PRM10</name>
    <name type="ordered locus">CAALFM_C701940CA</name>
    <name type="ORF">CaJ7.0221</name>
    <name type="ORF">CaO19.13880</name>
    <name type="ORF">CaO19.6527</name>
</gene>
<accession>Q5AH11</accession>
<accession>A0A1D8PQY3</accession>
<accession>Q3MPE9</accession>
<reference key="1">
    <citation type="journal article" date="2005" name="Genetics">
        <title>Sequence finishing and gene mapping for Candida albicans chromosome 7 and syntenic analysis against the Saccharomyces cerevisiae genome.</title>
        <authorList>
            <person name="Chibana H."/>
            <person name="Oka N."/>
            <person name="Nakayama H."/>
            <person name="Aoyama T."/>
            <person name="Magee B.B."/>
            <person name="Magee P.T."/>
            <person name="Mikami Y."/>
        </authorList>
    </citation>
    <scope>NUCLEOTIDE SEQUENCE [LARGE SCALE GENOMIC DNA]</scope>
    <source>
        <strain>SC5314 / ATCC MYA-2876</strain>
    </source>
</reference>
<reference key="2">
    <citation type="journal article" date="2004" name="Proc. Natl. Acad. Sci. U.S.A.">
        <title>The diploid genome sequence of Candida albicans.</title>
        <authorList>
            <person name="Jones T."/>
            <person name="Federspiel N.A."/>
            <person name="Chibana H."/>
            <person name="Dungan J."/>
            <person name="Kalman S."/>
            <person name="Magee B.B."/>
            <person name="Newport G."/>
            <person name="Thorstenson Y.R."/>
            <person name="Agabian N."/>
            <person name="Magee P.T."/>
            <person name="Davis R.W."/>
            <person name="Scherer S."/>
        </authorList>
    </citation>
    <scope>NUCLEOTIDE SEQUENCE [LARGE SCALE GENOMIC DNA]</scope>
    <source>
        <strain>SC5314 / ATCC MYA-2876</strain>
    </source>
</reference>
<reference key="3">
    <citation type="journal article" date="2007" name="Genome Biol.">
        <title>Assembly of the Candida albicans genome into sixteen supercontigs aligned on the eight chromosomes.</title>
        <authorList>
            <person name="van het Hoog M."/>
            <person name="Rast T.J."/>
            <person name="Martchenko M."/>
            <person name="Grindle S."/>
            <person name="Dignard D."/>
            <person name="Hogues H."/>
            <person name="Cuomo C."/>
            <person name="Berriman M."/>
            <person name="Scherer S."/>
            <person name="Magee B.B."/>
            <person name="Whiteway M."/>
            <person name="Chibana H."/>
            <person name="Nantel A."/>
            <person name="Magee P.T."/>
        </authorList>
    </citation>
    <scope>GENOME REANNOTATION</scope>
    <source>
        <strain>SC5314 / ATCC MYA-2876</strain>
    </source>
</reference>
<reference key="4">
    <citation type="journal article" date="2013" name="Genome Biol.">
        <title>Assembly of a phased diploid Candida albicans genome facilitates allele-specific measurements and provides a simple model for repeat and indel structure.</title>
        <authorList>
            <person name="Muzzey D."/>
            <person name="Schwartz K."/>
            <person name="Weissman J.S."/>
            <person name="Sherlock G."/>
        </authorList>
    </citation>
    <scope>NUCLEOTIDE SEQUENCE [LARGE SCALE GENOMIC DNA]</scope>
    <scope>GENOME REANNOTATION</scope>
    <source>
        <strain>SC5314 / ATCC MYA-2876</strain>
    </source>
</reference>
<sequence>MSDNRPTYDTSSSDEEPSNHFHIQLPQRQLNLQEIRKQNHKKHEKPTIAKQTASNLAKAKKITTGSNHKFGNSINNNNNNANKHLGSSSAGTNRRSLISPTSSTHVSSDDDDDDDDNAAFYGDKLNDNKKLNVFADTKNNLSHFQFNADGIKPKSLHGQGDDSSDDDGNNLDEVEDETHSDFAVLNQNHPPQQYYETDSSDEDEEDDDEVPQTVHKTYSNASSGRSSRLSRKKSMSETTDTRAPIPPTGRRSTNSNHSRESSGRRSTSSGNINSGGGLKGILRKMSLVDSTPVDSTNQDISHSDTFLGRVLNFGTNQGLSGGGLAPGASRVIREEDEGEWNLDEERRVGFAAHENDRDAFEMQPLNYEDLSEEAKQLIQQHVPGAGASNLDHSQQSSAAPSTEITPSQSPNQHLLNEKSNNNENNQQSTTVESSSSTSSPGEDEELARRRASEERKKAENPFYTPNPDLFLRGTNADNQELHQAPNDFLHDMDGDYIAPPKQVQAGVLSSLLRLYQNPQEQKSASSLSRVSTGTSGTALSSFDDSYDSDDYKDSKSSSNVDLQHKLKSGIKGGSKAMFNKAANKLKHHSHTRTNTVETQGSSNSEEFSNDKDEFSNGYDDDNKMNANLPSFQNARPKMPKKKTTEPVQKLKKLRHKQRAERLRITVHIADILQRQRFIMNMCRALMLFGAPTHRLEEYMVMTSRVLEIDGQFIYFPGCMLVSFGDAATRTSEVHLVRCAQGINLSKLADTHKIYKAVIHDLIGVEDASKKLDDLLKSKSRYPPWLCVLFYGLGSLAVTPFAFEGGWLDLPISFGVGLCVGYLQFYVSSISNLYSSVFEVSAAIVVAFIARGIGSIKGGDLFCFSAIAQGSLAIILPGYIILCGSLELQSRNLVAGAVRMFYAVIYSLFLGFGITLGAALYGWIDHNATSANSCASGHAIDEKWRILFVPMFALCLGLINQARWSQVPIMIVIAGIGYIGSFFAGKHFSTVTEFTACIGAFIVGVLGNLYSRIWKGMAVSAMLPAIFVQVPSGIASKSSLISGLNTADQITNKSSSNNGGTVTNDASSLSFGATMVEVSIGISVGLFAAALIIYPFGKKRTGLFAL</sequence>
<comment type="subcellular location">
    <subcellularLocation>
        <location>Membrane</location>
        <topology>Multi-pass membrane protein</topology>
    </subcellularLocation>
</comment>
<comment type="similarity">
    <text evidence="3">Belongs to the ThrE exporter (TC 2.A.79) family.</text>
</comment>
<proteinExistence type="inferred from homology"/>
<name>PRM10_CANAL</name>
<dbReference type="EMBL" id="AP006852">
    <property type="protein sequence ID" value="BAE44711.1"/>
    <property type="molecule type" value="Genomic_DNA"/>
</dbReference>
<dbReference type="EMBL" id="CP017629">
    <property type="protein sequence ID" value="AOW30558.1"/>
    <property type="molecule type" value="Genomic_DNA"/>
</dbReference>
<dbReference type="RefSeq" id="XP_721365.1">
    <property type="nucleotide sequence ID" value="XM_716272.2"/>
</dbReference>
<dbReference type="EnsemblFungi" id="C7_01940C_A-T">
    <property type="protein sequence ID" value="C7_01940C_A-T-p1"/>
    <property type="gene ID" value="C7_01940C_A"/>
</dbReference>
<dbReference type="GeneID" id="3636971"/>
<dbReference type="KEGG" id="cal:CAALFM_C701940CA"/>
<dbReference type="CGD" id="CAL0000186295">
    <property type="gene designation" value="orf19.13880"/>
</dbReference>
<dbReference type="VEuPathDB" id="FungiDB:C7_01940C_A"/>
<dbReference type="eggNOG" id="ENOG502QPMM">
    <property type="taxonomic scope" value="Eukaryota"/>
</dbReference>
<dbReference type="HOGENOM" id="CLU_007078_1_0_1"/>
<dbReference type="InParanoid" id="Q5AH11"/>
<dbReference type="OMA" id="FVYFPGT"/>
<dbReference type="OrthoDB" id="413008at2759"/>
<dbReference type="Proteomes" id="UP000000559">
    <property type="component" value="Chromosome 7"/>
</dbReference>
<dbReference type="GO" id="GO:0016020">
    <property type="term" value="C:membrane"/>
    <property type="evidence" value="ECO:0007669"/>
    <property type="project" value="UniProtKB-SubCell"/>
</dbReference>
<dbReference type="GO" id="GO:0022857">
    <property type="term" value="F:transmembrane transporter activity"/>
    <property type="evidence" value="ECO:0007669"/>
    <property type="project" value="InterPro"/>
</dbReference>
<dbReference type="InterPro" id="IPR010619">
    <property type="entry name" value="ThrE-like_N"/>
</dbReference>
<dbReference type="InterPro" id="IPR051361">
    <property type="entry name" value="ThrE/Ser_Exporter"/>
</dbReference>
<dbReference type="PANTHER" id="PTHR31082">
    <property type="entry name" value="PHEROMONE-REGULATED MEMBRANE PROTEIN 10"/>
    <property type="match status" value="1"/>
</dbReference>
<dbReference type="PANTHER" id="PTHR31082:SF4">
    <property type="entry name" value="PHEROMONE-REGULATED MEMBRANE PROTEIN 10"/>
    <property type="match status" value="1"/>
</dbReference>
<dbReference type="Pfam" id="PF06738">
    <property type="entry name" value="ThrE"/>
    <property type="match status" value="1"/>
</dbReference>
<keyword id="KW-0472">Membrane</keyword>
<keyword id="KW-1185">Reference proteome</keyword>
<keyword id="KW-0812">Transmembrane</keyword>
<keyword id="KW-1133">Transmembrane helix</keyword>
<organism>
    <name type="scientific">Candida albicans (strain SC5314 / ATCC MYA-2876)</name>
    <name type="common">Yeast</name>
    <dbReference type="NCBI Taxonomy" id="237561"/>
    <lineage>
        <taxon>Eukaryota</taxon>
        <taxon>Fungi</taxon>
        <taxon>Dikarya</taxon>
        <taxon>Ascomycota</taxon>
        <taxon>Saccharomycotina</taxon>
        <taxon>Pichiomycetes</taxon>
        <taxon>Debaryomycetaceae</taxon>
        <taxon>Candida/Lodderomyces clade</taxon>
        <taxon>Candida</taxon>
    </lineage>
</organism>
<evidence type="ECO:0000255" key="1"/>
<evidence type="ECO:0000256" key="2">
    <source>
        <dbReference type="SAM" id="MobiDB-lite"/>
    </source>
</evidence>
<evidence type="ECO:0000305" key="3"/>